<dbReference type="EC" id="1.5.1.3"/>
<dbReference type="EMBL" id="Z86002">
    <property type="protein sequence ID" value="CAB06660.1"/>
    <property type="molecule type" value="Genomic_DNA"/>
</dbReference>
<dbReference type="SMR" id="P95524"/>
<dbReference type="CARD" id="ARO:3004644">
    <property type="molecule name" value="Pmir_dfrA6"/>
    <property type="mechanism identifier" value="ARO:0001002"/>
    <property type="mechanism name" value="antibiotic target replacement"/>
</dbReference>
<dbReference type="KEGG" id="ag:CAB06660"/>
<dbReference type="UniPathway" id="UPA00077">
    <property type="reaction ID" value="UER00158"/>
</dbReference>
<dbReference type="GO" id="GO:0005829">
    <property type="term" value="C:cytosol"/>
    <property type="evidence" value="ECO:0007669"/>
    <property type="project" value="TreeGrafter"/>
</dbReference>
<dbReference type="GO" id="GO:0004146">
    <property type="term" value="F:dihydrofolate reductase activity"/>
    <property type="evidence" value="ECO:0007669"/>
    <property type="project" value="UniProtKB-EC"/>
</dbReference>
<dbReference type="GO" id="GO:0050661">
    <property type="term" value="F:NADP binding"/>
    <property type="evidence" value="ECO:0007669"/>
    <property type="project" value="InterPro"/>
</dbReference>
<dbReference type="GO" id="GO:0046452">
    <property type="term" value="P:dihydrofolate metabolic process"/>
    <property type="evidence" value="ECO:0007669"/>
    <property type="project" value="TreeGrafter"/>
</dbReference>
<dbReference type="GO" id="GO:0046655">
    <property type="term" value="P:folic acid metabolic process"/>
    <property type="evidence" value="ECO:0007669"/>
    <property type="project" value="TreeGrafter"/>
</dbReference>
<dbReference type="GO" id="GO:0006730">
    <property type="term" value="P:one-carbon metabolic process"/>
    <property type="evidence" value="ECO:0007669"/>
    <property type="project" value="UniProtKB-KW"/>
</dbReference>
<dbReference type="GO" id="GO:0046677">
    <property type="term" value="P:response to antibiotic"/>
    <property type="evidence" value="ECO:0007669"/>
    <property type="project" value="UniProtKB-KW"/>
</dbReference>
<dbReference type="GO" id="GO:0031427">
    <property type="term" value="P:response to methotrexate"/>
    <property type="evidence" value="ECO:0007669"/>
    <property type="project" value="UniProtKB-KW"/>
</dbReference>
<dbReference type="GO" id="GO:0046654">
    <property type="term" value="P:tetrahydrofolate biosynthetic process"/>
    <property type="evidence" value="ECO:0007669"/>
    <property type="project" value="UniProtKB-UniPathway"/>
</dbReference>
<dbReference type="CDD" id="cd00209">
    <property type="entry name" value="DHFR"/>
    <property type="match status" value="1"/>
</dbReference>
<dbReference type="Gene3D" id="3.40.430.10">
    <property type="entry name" value="Dihydrofolate Reductase, subunit A"/>
    <property type="match status" value="1"/>
</dbReference>
<dbReference type="InterPro" id="IPR012259">
    <property type="entry name" value="DHFR"/>
</dbReference>
<dbReference type="InterPro" id="IPR024072">
    <property type="entry name" value="DHFR-like_dom_sf"/>
</dbReference>
<dbReference type="InterPro" id="IPR017925">
    <property type="entry name" value="DHFR_CS"/>
</dbReference>
<dbReference type="InterPro" id="IPR001796">
    <property type="entry name" value="DHFR_dom"/>
</dbReference>
<dbReference type="NCBIfam" id="NF000330">
    <property type="entry name" value="trim_DfrA1_like"/>
    <property type="match status" value="1"/>
</dbReference>
<dbReference type="PANTHER" id="PTHR48069">
    <property type="entry name" value="DIHYDROFOLATE REDUCTASE"/>
    <property type="match status" value="1"/>
</dbReference>
<dbReference type="PANTHER" id="PTHR48069:SF3">
    <property type="entry name" value="DIHYDROFOLATE REDUCTASE"/>
    <property type="match status" value="1"/>
</dbReference>
<dbReference type="Pfam" id="PF00186">
    <property type="entry name" value="DHFR_1"/>
    <property type="match status" value="1"/>
</dbReference>
<dbReference type="PRINTS" id="PR00070">
    <property type="entry name" value="DHFR"/>
</dbReference>
<dbReference type="SUPFAM" id="SSF53597">
    <property type="entry name" value="Dihydrofolate reductase-like"/>
    <property type="match status" value="1"/>
</dbReference>
<dbReference type="PROSITE" id="PS00075">
    <property type="entry name" value="DHFR_1"/>
    <property type="match status" value="1"/>
</dbReference>
<dbReference type="PROSITE" id="PS51330">
    <property type="entry name" value="DHFR_2"/>
    <property type="match status" value="1"/>
</dbReference>
<name>DYR6_PROMI</name>
<keyword id="KW-0046">Antibiotic resistance</keyword>
<keyword id="KW-0487">Methotrexate resistance</keyword>
<keyword id="KW-0521">NADP</keyword>
<keyword id="KW-0554">One-carbon metabolism</keyword>
<keyword id="KW-0560">Oxidoreductase</keyword>
<keyword id="KW-0614">Plasmid</keyword>
<keyword id="KW-0817">Trimethoprim resistance</keyword>
<reference key="1">
    <citation type="journal article" date="1991" name="J. Med. Microbiol.">
        <title>Nucleotide sequence of dihydrofolate reductase type VI.</title>
        <authorList>
            <person name="Wylie B.A."/>
            <person name="Koornhof H.J."/>
        </authorList>
    </citation>
    <scope>NUCLEOTIDE SEQUENCE [GENOMIC DNA]</scope>
    <source>
        <strain>J120</strain>
    </source>
</reference>
<evidence type="ECO:0000250" key="1"/>
<evidence type="ECO:0000255" key="2">
    <source>
        <dbReference type="PROSITE-ProRule" id="PRU00660"/>
    </source>
</evidence>
<evidence type="ECO:0000305" key="3"/>
<geneLocation type="plasmid">
    <name>pUK672</name>
</geneLocation>
<gene>
    <name type="primary">dhfrVI</name>
    <name type="synonym">dfrVI</name>
</gene>
<protein>
    <recommendedName>
        <fullName>Dihydrofolate reductase type 6</fullName>
        <ecNumber>1.5.1.3</ecNumber>
    </recommendedName>
    <alternativeName>
        <fullName>Dihydrofolate reductase type VI</fullName>
    </alternativeName>
</protein>
<sequence length="157" mass="17444">MKISLMAAVSENGVIGSGLDIPWHVQGEQLLFKAMTYNQWLLVGRKTFDSMGKLPNRKYAVVTRSKIISNDPDVVYFASVESALAYLNNATAHIFVSGGGEIYKALIDQADVIHLSVIHKHISGDVFFPPVPQGFKQTFEQSFSSNIDYTYQIWAKG</sequence>
<accession>P95524</accession>
<proteinExistence type="inferred from homology"/>
<comment type="function">
    <text evidence="1">Key enzyme in folate metabolism. Catalyzes an essential reaction for de novo glycine and purine synthesis, and for DNA precursor synthesis (By similarity).</text>
</comment>
<comment type="catalytic activity">
    <reaction evidence="2">
        <text>(6S)-5,6,7,8-tetrahydrofolate + NADP(+) = 7,8-dihydrofolate + NADPH + H(+)</text>
        <dbReference type="Rhea" id="RHEA:15009"/>
        <dbReference type="ChEBI" id="CHEBI:15378"/>
        <dbReference type="ChEBI" id="CHEBI:57451"/>
        <dbReference type="ChEBI" id="CHEBI:57453"/>
        <dbReference type="ChEBI" id="CHEBI:57783"/>
        <dbReference type="ChEBI" id="CHEBI:58349"/>
        <dbReference type="EC" id="1.5.1.3"/>
    </reaction>
</comment>
<comment type="pathway">
    <text>Cofactor biosynthesis; tetrahydrofolate biosynthesis; 5,6,7,8-tetrahydrofolate from 7,8-dihydrofolate: step 1/1.</text>
</comment>
<comment type="subunit">
    <text evidence="1">Homodimer.</text>
</comment>
<comment type="similarity">
    <text evidence="3">Belongs to the dihydrofolate reductase family.</text>
</comment>
<feature type="chain" id="PRO_0000186423" description="Dihydrofolate reductase type 6">
    <location>
        <begin position="1"/>
        <end position="157"/>
    </location>
</feature>
<feature type="domain" description="DHFR" evidence="2">
    <location>
        <begin position="2"/>
        <end position="156"/>
    </location>
</feature>
<organism>
    <name type="scientific">Proteus mirabilis</name>
    <dbReference type="NCBI Taxonomy" id="584"/>
    <lineage>
        <taxon>Bacteria</taxon>
        <taxon>Pseudomonadati</taxon>
        <taxon>Pseudomonadota</taxon>
        <taxon>Gammaproteobacteria</taxon>
        <taxon>Enterobacterales</taxon>
        <taxon>Morganellaceae</taxon>
        <taxon>Proteus</taxon>
    </lineage>
</organism>